<comment type="function">
    <text evidence="1">Forms an icosahedral capsid with a T=7 symmetry and a 50 nm diameter. The capsid is composed of 72 pentamers linked to each other by disulfide bonds and associated with L2 proteins. Binds to heparan sulfate proteoglycans on cell surface of basal layer keratinocytes to provide initial virion attachment. This binding mediates a conformational change in the virus capsid that facilitates efficient infection. The virion enters the host cell via endocytosis. During virus trafficking, L1 protein dissociates from the viral DNA and the genomic DNA is released to the host nucleus. The virion assembly takes place within the cell nucleus. Encapsulates the genomic DNA together with protein L2.</text>
</comment>
<comment type="subunit">
    <text evidence="1">Self-assembles into homopentamers. The capsid has an icosahedral symmetry and consists of 72 capsomers, with each capsomer being a pentamer of L1. Interacts with the minor capsid protein L2; this interaction is necessary for viral genome encapsidation. Interacts with protein E2; this interaction enhances E2-dependent replication and transcription activation.</text>
</comment>
<comment type="subcellular location">
    <subcellularLocation>
        <location evidence="1">Virion</location>
    </subcellularLocation>
    <subcellularLocation>
        <location evidence="1">Host nucleus</location>
    </subcellularLocation>
</comment>
<comment type="similarity">
    <text evidence="1">Belongs to the papillomaviridae L1 protein family.</text>
</comment>
<organismHost>
    <name type="scientific">Sylvilagus floridanus</name>
    <name type="common">Cottontail rabbit</name>
    <dbReference type="NCBI Taxonomy" id="9988"/>
</organismHost>
<reference key="1">
    <citation type="journal article" date="1985" name="Proc. Natl. Acad. Sci. U.S.A.">
        <title>Genomic structure of the cottontail rabbit (Shope) papillomavirus.</title>
        <authorList>
            <person name="Giri I."/>
            <person name="Danos O."/>
            <person name="Yaniv M."/>
        </authorList>
    </citation>
    <scope>NUCLEOTIDE SEQUENCE [GENOMIC DNA]</scope>
</reference>
<evidence type="ECO:0000255" key="1">
    <source>
        <dbReference type="HAMAP-Rule" id="MF_04002"/>
    </source>
</evidence>
<evidence type="ECO:0000256" key="2">
    <source>
        <dbReference type="SAM" id="MobiDB-lite"/>
    </source>
</evidence>
<feature type="chain" id="PRO_0000133556" description="Major capsid protein L1">
    <location>
        <begin position="1"/>
        <end position="505"/>
    </location>
</feature>
<feature type="region of interest" description="Disordered" evidence="2">
    <location>
        <begin position="479"/>
        <end position="505"/>
    </location>
</feature>
<feature type="disulfide bond" description="Interchain (with C-434)" evidence="1">
    <location>
        <position position="175"/>
    </location>
</feature>
<feature type="disulfide bond" description="Interchain (with C-175)" evidence="1">
    <location>
        <position position="434"/>
    </location>
</feature>
<gene>
    <name evidence="1" type="primary">L1</name>
</gene>
<dbReference type="EMBL" id="K02708">
    <property type="status" value="NOT_ANNOTATED_CDS"/>
    <property type="molecule type" value="Genomic_DNA"/>
</dbReference>
<dbReference type="PIR" id="A03643">
    <property type="entry name" value="P1WLRB"/>
</dbReference>
<dbReference type="SMR" id="P03102"/>
<dbReference type="Proteomes" id="UP000008787">
    <property type="component" value="Segment"/>
</dbReference>
<dbReference type="GO" id="GO:0042025">
    <property type="term" value="C:host cell nucleus"/>
    <property type="evidence" value="ECO:0007669"/>
    <property type="project" value="UniProtKB-SubCell"/>
</dbReference>
<dbReference type="GO" id="GO:0039620">
    <property type="term" value="C:T=7 icosahedral viral capsid"/>
    <property type="evidence" value="ECO:0007669"/>
    <property type="project" value="UniProtKB-UniRule"/>
</dbReference>
<dbReference type="GO" id="GO:0005198">
    <property type="term" value="F:structural molecule activity"/>
    <property type="evidence" value="ECO:0007669"/>
    <property type="project" value="UniProtKB-UniRule"/>
</dbReference>
<dbReference type="GO" id="GO:0075509">
    <property type="term" value="P:endocytosis involved in viral entry into host cell"/>
    <property type="evidence" value="ECO:0007669"/>
    <property type="project" value="UniProtKB-KW"/>
</dbReference>
<dbReference type="GO" id="GO:0019062">
    <property type="term" value="P:virion attachment to host cell"/>
    <property type="evidence" value="ECO:0007669"/>
    <property type="project" value="UniProtKB-UniRule"/>
</dbReference>
<dbReference type="Gene3D" id="2.60.175.20">
    <property type="entry name" value="Major capsid L1 (late) superfamily, Papillomavirus"/>
    <property type="match status" value="2"/>
</dbReference>
<dbReference type="HAMAP" id="MF_04002">
    <property type="entry name" value="PPV_L1"/>
    <property type="match status" value="1"/>
</dbReference>
<dbReference type="InterPro" id="IPR002210">
    <property type="entry name" value="Capsid_L1_Papillomavir"/>
</dbReference>
<dbReference type="InterPro" id="IPR036973">
    <property type="entry name" value="Capsid_L1_sf_Papillomavir"/>
</dbReference>
<dbReference type="InterPro" id="IPR011222">
    <property type="entry name" value="dsDNA_vir_gr_I_capsid"/>
</dbReference>
<dbReference type="Pfam" id="PF00500">
    <property type="entry name" value="Late_protein_L1"/>
    <property type="match status" value="1"/>
</dbReference>
<dbReference type="PRINTS" id="PR00865">
    <property type="entry name" value="HPVCAPSIDL1"/>
</dbReference>
<dbReference type="SUPFAM" id="SSF88648">
    <property type="entry name" value="Group I dsDNA viruses"/>
    <property type="match status" value="1"/>
</dbReference>
<proteinExistence type="inferred from homology"/>
<sequence>MAVWLSTQNKFYLPPQPVTKIPSTDEYVTRTNVFYYASSDRLLTVGHPYYEIRDKGTMLVPKVSPNQYRVFRIKLPDPNKFAFGDKQLYDPEKERLVWCLRGIEVNRGQPLGVSVTGNPIFNKFDDVENPTKYYNNHADQQDYRKSMAFDPKQVQLLMLGCVPATGEHWAQAKQCAEDPPQQTDCPPIELVNTVIEDGDMCEIGFGAMDHKTLQASLSEVPLELAQSISKYPDYLKMQKDQFGDSMFFYARREQMYARHFFSRAGGDKENVKSRAYIKRTQMQGEANANIATDNYCITPSGSLVSSDSQVFNRAYWLQKAQGMNNGVCWDNQIFVTVVDNTRGTILSLVTKSKEQIKKTHGKTVHFSSYLRHVEEYELQFVLQLCKVKLTPENLSYLHSMHPTIIDNWQLSVSAQPSGTLEDQYRYLQSIATKCPPPEPPKENTDPYKNYKFWEVDLSEKLSDQLDQYPLGRKFLNQSGLQRIGTKRPAPAPVSIVKSSKRKRRT</sequence>
<keyword id="KW-0167">Capsid protein</keyword>
<keyword id="KW-1015">Disulfide bond</keyword>
<keyword id="KW-1048">Host nucleus</keyword>
<keyword id="KW-0945">Host-virus interaction</keyword>
<keyword id="KW-0426">Late protein</keyword>
<keyword id="KW-1185">Reference proteome</keyword>
<keyword id="KW-1145">T=7 icosahedral capsid protein</keyword>
<keyword id="KW-1161">Viral attachment to host cell</keyword>
<keyword id="KW-1162">Viral penetration into host cytoplasm</keyword>
<keyword id="KW-0946">Virion</keyword>
<keyword id="KW-1164">Virus endocytosis by host</keyword>
<keyword id="KW-1160">Virus entry into host cell</keyword>
<organism>
    <name type="scientific">Cottontail rabbit papillomavirus (strain Kansas)</name>
    <name type="common">CRPV</name>
    <name type="synonym">Papillomavirus sylvilagi</name>
    <dbReference type="NCBI Taxonomy" id="31553"/>
    <lineage>
        <taxon>Viruses</taxon>
        <taxon>Monodnaviria</taxon>
        <taxon>Shotokuvirae</taxon>
        <taxon>Cossaviricota</taxon>
        <taxon>Papovaviricetes</taxon>
        <taxon>Zurhausenvirales</taxon>
        <taxon>Papillomaviridae</taxon>
        <taxon>Firstpapillomavirinae</taxon>
        <taxon>Kappapapillomavirus</taxon>
        <taxon>Kappapapillomavirus 2</taxon>
    </lineage>
</organism>
<accession>P03102</accession>
<name>VL1_CRPVK</name>
<protein>
    <recommendedName>
        <fullName evidence="1">Major capsid protein L1</fullName>
    </recommendedName>
</protein>